<feature type="chain" id="PRO_0000219770" description="Photosystem II reaction center protein L">
    <location>
        <begin position="1"/>
        <end position="38"/>
    </location>
</feature>
<feature type="transmembrane region" description="Helical" evidence="1">
    <location>
        <begin position="17"/>
        <end position="37"/>
    </location>
</feature>
<organism>
    <name type="scientific">Secale cereale</name>
    <name type="common">Rye</name>
    <dbReference type="NCBI Taxonomy" id="4550"/>
    <lineage>
        <taxon>Eukaryota</taxon>
        <taxon>Viridiplantae</taxon>
        <taxon>Streptophyta</taxon>
        <taxon>Embryophyta</taxon>
        <taxon>Tracheophyta</taxon>
        <taxon>Spermatophyta</taxon>
        <taxon>Magnoliopsida</taxon>
        <taxon>Liliopsida</taxon>
        <taxon>Poales</taxon>
        <taxon>Poaceae</taxon>
        <taxon>BOP clade</taxon>
        <taxon>Pooideae</taxon>
        <taxon>Triticodae</taxon>
        <taxon>Triticeae</taxon>
        <taxon>Hordeinae</taxon>
        <taxon>Secale</taxon>
    </lineage>
</organism>
<evidence type="ECO:0000255" key="1">
    <source>
        <dbReference type="HAMAP-Rule" id="MF_01317"/>
    </source>
</evidence>
<accession>P60149</accession>
<accession>O47030</accession>
<accession>P12166</accession>
<accession>P12167</accession>
<accession>Q34007</accession>
<sequence>MTQSNPNEQNVELNRTSLYWGLLLIFVLAVLFSNYFFN</sequence>
<protein>
    <recommendedName>
        <fullName evidence="1">Photosystem II reaction center protein L</fullName>
        <shortName evidence="1">PSII-L</shortName>
    </recommendedName>
</protein>
<comment type="function">
    <text evidence="1">One of the components of the core complex of photosystem II (PSII). PSII is a light-driven water:plastoquinone oxidoreductase that uses light energy to abstract electrons from H(2)O, generating O(2) and a proton gradient subsequently used for ATP formation. It consists of a core antenna complex that captures photons, and an electron transfer chain that converts photonic excitation into a charge separation. This subunit is found at the monomer-monomer interface and is required for correct PSII assembly and/or dimerization.</text>
</comment>
<comment type="subunit">
    <text evidence="1">PSII is composed of 1 copy each of membrane proteins PsbA, PsbB, PsbC, PsbD, PsbE, PsbF, PsbH, PsbI, PsbJ, PsbK, PsbL, PsbM, PsbT, PsbX, PsbY, PsbZ, Psb30/Ycf12, at least 3 peripheral proteins of the oxygen-evolving complex and a large number of cofactors. It forms dimeric complexes.</text>
</comment>
<comment type="subcellular location">
    <subcellularLocation>
        <location evidence="1">Plastid</location>
        <location evidence="1">Chloroplast thylakoid membrane</location>
        <topology evidence="1">Single-pass membrane protein</topology>
    </subcellularLocation>
</comment>
<comment type="similarity">
    <text evidence="1">Belongs to the PsbL family.</text>
</comment>
<proteinExistence type="inferred from homology"/>
<reference key="1">
    <citation type="journal article" date="1989" name="Nucleic Acids Res.">
        <title>Nucleotide sequence of the rye chloroplast DNA fragment, comprising psbE and psbF genes.</title>
        <authorList>
            <person name="Zolotarev A.S."/>
            <person name="Kolosov V.L."/>
        </authorList>
    </citation>
    <scope>NUCLEOTIDE SEQUENCE [GENOMIC DNA]</scope>
</reference>
<reference key="2">
    <citation type="journal article" date="1989" name="Bioorg. Khim.">
        <title>Photosystem II of rye. Nucleotide sequence of genes psbE, psbF, psbL and OPC40 of chloroplast DNA.</title>
        <authorList>
            <person name="Kolosov V.L."/>
            <person name="Klezovich O.N."/>
            <person name="Abdulaev N.G."/>
            <person name="Zolosharev A.S."/>
        </authorList>
    </citation>
    <scope>NUCLEOTIDE SEQUENCE [GENOMIC DNA]</scope>
</reference>
<geneLocation type="chloroplast"/>
<name>PSBL_SECCE</name>
<dbReference type="EMBL" id="X13326">
    <property type="protein sequence ID" value="CAA31700.1"/>
    <property type="molecule type" value="Genomic_DNA"/>
</dbReference>
<dbReference type="PIR" id="S03193">
    <property type="entry name" value="S03193"/>
</dbReference>
<dbReference type="RefSeq" id="YP_008239186.1">
    <property type="nucleotide sequence ID" value="NC_021761.1"/>
</dbReference>
<dbReference type="SMR" id="P60149"/>
<dbReference type="GeneID" id="16792725"/>
<dbReference type="GO" id="GO:0009535">
    <property type="term" value="C:chloroplast thylakoid membrane"/>
    <property type="evidence" value="ECO:0007669"/>
    <property type="project" value="UniProtKB-SubCell"/>
</dbReference>
<dbReference type="GO" id="GO:0009539">
    <property type="term" value="C:photosystem II reaction center"/>
    <property type="evidence" value="ECO:0007669"/>
    <property type="project" value="InterPro"/>
</dbReference>
<dbReference type="GO" id="GO:0015979">
    <property type="term" value="P:photosynthesis"/>
    <property type="evidence" value="ECO:0007669"/>
    <property type="project" value="UniProtKB-UniRule"/>
</dbReference>
<dbReference type="HAMAP" id="MF_01317">
    <property type="entry name" value="PSII_PsbL"/>
    <property type="match status" value="1"/>
</dbReference>
<dbReference type="InterPro" id="IPR003372">
    <property type="entry name" value="PSII_PsbL"/>
</dbReference>
<dbReference type="InterPro" id="IPR037266">
    <property type="entry name" value="PSII_PsbL_sf"/>
</dbReference>
<dbReference type="NCBIfam" id="NF001972">
    <property type="entry name" value="PRK00753.1"/>
    <property type="match status" value="1"/>
</dbReference>
<dbReference type="Pfam" id="PF02419">
    <property type="entry name" value="PsbL"/>
    <property type="match status" value="1"/>
</dbReference>
<dbReference type="SUPFAM" id="SSF161017">
    <property type="entry name" value="Photosystem II reaction center protein L, PsbL"/>
    <property type="match status" value="1"/>
</dbReference>
<gene>
    <name evidence="1" type="primary">psbL</name>
</gene>
<keyword id="KW-0150">Chloroplast</keyword>
<keyword id="KW-0472">Membrane</keyword>
<keyword id="KW-0602">Photosynthesis</keyword>
<keyword id="KW-0604">Photosystem II</keyword>
<keyword id="KW-0934">Plastid</keyword>
<keyword id="KW-0674">Reaction center</keyword>
<keyword id="KW-0793">Thylakoid</keyword>
<keyword id="KW-0812">Transmembrane</keyword>
<keyword id="KW-1133">Transmembrane helix</keyword>